<feature type="chain" id="PRO_0000406720" description="Pentafunctional AROM polypeptide 1">
    <location>
        <begin position="1"/>
        <end position="1551"/>
    </location>
</feature>
<feature type="region of interest" description="3-dehydroquinate synthase">
    <location>
        <begin position="1"/>
        <end position="379"/>
    </location>
</feature>
<feature type="region of interest" description="EPSP synthase">
    <location>
        <begin position="392"/>
        <end position="835"/>
    </location>
</feature>
<feature type="region of interest" description="Shikimate kinase">
    <location>
        <begin position="854"/>
        <end position="1044"/>
    </location>
</feature>
<feature type="region of interest" description="3-dehydroquinase">
    <location>
        <begin position="1045"/>
        <end position="1258"/>
    </location>
</feature>
<feature type="region of interest" description="Shikimate dehydrogenase">
    <location>
        <begin position="1271"/>
        <end position="1551"/>
    </location>
</feature>
<feature type="active site" description="Proton acceptor; for 3-dehydroquinate synthase activity" evidence="1">
    <location>
        <position position="253"/>
    </location>
</feature>
<feature type="active site" description="Proton acceptor; for 3-dehydroquinate synthase activity" evidence="1">
    <location>
        <position position="268"/>
    </location>
</feature>
<feature type="active site" description="Proton acceptor; for 3-dehydroquinate dehydratase activity" evidence="1">
    <location>
        <position position="1162"/>
    </location>
</feature>
<feature type="active site" description="Schiff-base intermediate with substrate; for 3-dehydroquinate dehydratase activity" evidence="1">
    <location>
        <position position="1191"/>
    </location>
</feature>
<feature type="binding site" evidence="1">
    <location>
        <begin position="42"/>
        <end position="44"/>
    </location>
    <ligand>
        <name>NAD(+)</name>
        <dbReference type="ChEBI" id="CHEBI:57540"/>
    </ligand>
</feature>
<feature type="binding site" evidence="1">
    <location>
        <begin position="80"/>
        <end position="83"/>
    </location>
    <ligand>
        <name>NAD(+)</name>
        <dbReference type="ChEBI" id="CHEBI:57540"/>
    </ligand>
</feature>
<feature type="binding site" evidence="1">
    <location>
        <begin position="111"/>
        <end position="113"/>
    </location>
    <ligand>
        <name>NAD(+)</name>
        <dbReference type="ChEBI" id="CHEBI:57540"/>
    </ligand>
</feature>
<feature type="binding site" evidence="1">
    <location>
        <position position="116"/>
    </location>
    <ligand>
        <name>NAD(+)</name>
        <dbReference type="ChEBI" id="CHEBI:57540"/>
    </ligand>
</feature>
<feature type="binding site" evidence="1">
    <location>
        <position position="127"/>
    </location>
    <ligand>
        <name>7-phospho-2-dehydro-3-deoxy-D-arabino-heptonate</name>
        <dbReference type="ChEBI" id="CHEBI:58394"/>
    </ligand>
</feature>
<feature type="binding site" evidence="1">
    <location>
        <begin position="136"/>
        <end position="137"/>
    </location>
    <ligand>
        <name>NAD(+)</name>
        <dbReference type="ChEBI" id="CHEBI:57540"/>
    </ligand>
</feature>
<feature type="binding site" evidence="1">
    <location>
        <position position="143"/>
    </location>
    <ligand>
        <name>7-phospho-2-dehydro-3-deoxy-D-arabino-heptonate</name>
        <dbReference type="ChEBI" id="CHEBI:58394"/>
    </ligand>
</feature>
<feature type="binding site" evidence="1">
    <location>
        <position position="149"/>
    </location>
    <ligand>
        <name>7-phospho-2-dehydro-3-deoxy-D-arabino-heptonate</name>
        <dbReference type="ChEBI" id="CHEBI:58394"/>
    </ligand>
</feature>
<feature type="binding site" evidence="1">
    <location>
        <position position="158"/>
    </location>
    <ligand>
        <name>NAD(+)</name>
        <dbReference type="ChEBI" id="CHEBI:57540"/>
    </ligand>
</feature>
<feature type="binding site" evidence="1">
    <location>
        <position position="159"/>
    </location>
    <ligand>
        <name>7-phospho-2-dehydro-3-deoxy-D-arabino-heptonate</name>
        <dbReference type="ChEBI" id="CHEBI:58394"/>
    </ligand>
</feature>
<feature type="binding site" evidence="1">
    <location>
        <begin position="176"/>
        <end position="179"/>
    </location>
    <ligand>
        <name>NAD(+)</name>
        <dbReference type="ChEBI" id="CHEBI:57540"/>
    </ligand>
</feature>
<feature type="binding site" evidence="1">
    <location>
        <position position="187"/>
    </location>
    <ligand>
        <name>NAD(+)</name>
        <dbReference type="ChEBI" id="CHEBI:57540"/>
    </ligand>
</feature>
<feature type="binding site" evidence="1">
    <location>
        <begin position="191"/>
        <end position="194"/>
    </location>
    <ligand>
        <name>7-phospho-2-dehydro-3-deoxy-D-arabino-heptonate</name>
        <dbReference type="ChEBI" id="CHEBI:58394"/>
    </ligand>
</feature>
<feature type="binding site" evidence="1">
    <location>
        <position position="191"/>
    </location>
    <ligand>
        <name>Zn(2+)</name>
        <dbReference type="ChEBI" id="CHEBI:29105"/>
        <note>catalytic</note>
    </ligand>
</feature>
<feature type="binding site" evidence="1">
    <location>
        <position position="243"/>
    </location>
    <ligand>
        <name>7-phospho-2-dehydro-3-deoxy-D-arabino-heptonate</name>
        <dbReference type="ChEBI" id="CHEBI:58394"/>
    </ligand>
</feature>
<feature type="binding site" evidence="1">
    <location>
        <begin position="257"/>
        <end position="261"/>
    </location>
    <ligand>
        <name>7-phospho-2-dehydro-3-deoxy-D-arabino-heptonate</name>
        <dbReference type="ChEBI" id="CHEBI:58394"/>
    </ligand>
</feature>
<feature type="binding site" evidence="1">
    <location>
        <position position="264"/>
    </location>
    <ligand>
        <name>7-phospho-2-dehydro-3-deoxy-D-arabino-heptonate</name>
        <dbReference type="ChEBI" id="CHEBI:58394"/>
    </ligand>
</feature>
<feature type="binding site" evidence="1">
    <location>
        <position position="264"/>
    </location>
    <ligand>
        <name>Zn(2+)</name>
        <dbReference type="ChEBI" id="CHEBI:29105"/>
        <note>catalytic</note>
    </ligand>
</feature>
<feature type="binding site" evidence="1">
    <location>
        <position position="280"/>
    </location>
    <ligand>
        <name>7-phospho-2-dehydro-3-deoxy-D-arabino-heptonate</name>
        <dbReference type="ChEBI" id="CHEBI:58394"/>
    </ligand>
</feature>
<feature type="binding site" evidence="1">
    <location>
        <position position="280"/>
    </location>
    <ligand>
        <name>Zn(2+)</name>
        <dbReference type="ChEBI" id="CHEBI:29105"/>
        <note>catalytic</note>
    </ligand>
</feature>
<feature type="binding site" evidence="1">
    <location>
        <position position="351"/>
    </location>
    <ligand>
        <name>7-phospho-2-dehydro-3-deoxy-D-arabino-heptonate</name>
        <dbReference type="ChEBI" id="CHEBI:58394"/>
    </ligand>
</feature>
<feature type="binding site" evidence="1">
    <location>
        <begin position="861"/>
        <end position="868"/>
    </location>
    <ligand>
        <name>ATP</name>
        <dbReference type="ChEBI" id="CHEBI:30616"/>
    </ligand>
</feature>
<dbReference type="EC" id="4.2.3.4" evidence="1"/>
<dbReference type="EC" id="2.5.1.19" evidence="1"/>
<dbReference type="EC" id="2.7.1.71" evidence="1"/>
<dbReference type="EC" id="4.2.1.10" evidence="1"/>
<dbReference type="EC" id="1.1.1.25" evidence="1"/>
<dbReference type="EMBL" id="DS236869">
    <property type="protein sequence ID" value="EDK47592.1"/>
    <property type="molecule type" value="Genomic_DNA"/>
</dbReference>
<dbReference type="RefSeq" id="XP_001528832.1">
    <property type="nucleotide sequence ID" value="XM_001528782.1"/>
</dbReference>
<dbReference type="SMR" id="A5H2Q8"/>
<dbReference type="FunCoup" id="A5H2Q8">
    <property type="interactions" value="466"/>
</dbReference>
<dbReference type="STRING" id="379508.A5H2Q8"/>
<dbReference type="VEuPathDB" id="FungiDB:LELG_05773"/>
<dbReference type="eggNOG" id="KOG0692">
    <property type="taxonomic scope" value="Eukaryota"/>
</dbReference>
<dbReference type="HOGENOM" id="CLU_001201_1_1_1"/>
<dbReference type="InParanoid" id="A5H2Q8"/>
<dbReference type="OMA" id="SWANMSW"/>
<dbReference type="OrthoDB" id="197068at2759"/>
<dbReference type="UniPathway" id="UPA00053">
    <property type="reaction ID" value="UER00085"/>
</dbReference>
<dbReference type="UniPathway" id="UPA00053">
    <property type="reaction ID" value="UER00086"/>
</dbReference>
<dbReference type="UniPathway" id="UPA00053">
    <property type="reaction ID" value="UER00087"/>
</dbReference>
<dbReference type="UniPathway" id="UPA00053">
    <property type="reaction ID" value="UER00088"/>
</dbReference>
<dbReference type="UniPathway" id="UPA00053">
    <property type="reaction ID" value="UER00089"/>
</dbReference>
<dbReference type="Proteomes" id="UP000001996">
    <property type="component" value="Unassembled WGS sequence"/>
</dbReference>
<dbReference type="GO" id="GO:0005737">
    <property type="term" value="C:cytoplasm"/>
    <property type="evidence" value="ECO:0007669"/>
    <property type="project" value="UniProtKB-SubCell"/>
</dbReference>
<dbReference type="GO" id="GO:0003855">
    <property type="term" value="F:3-dehydroquinate dehydratase activity"/>
    <property type="evidence" value="ECO:0007669"/>
    <property type="project" value="UniProtKB-UniRule"/>
</dbReference>
<dbReference type="GO" id="GO:0003856">
    <property type="term" value="F:3-dehydroquinate synthase activity"/>
    <property type="evidence" value="ECO:0007669"/>
    <property type="project" value="UniProtKB-UniRule"/>
</dbReference>
<dbReference type="GO" id="GO:0003866">
    <property type="term" value="F:3-phosphoshikimate 1-carboxyvinyltransferase activity"/>
    <property type="evidence" value="ECO:0007669"/>
    <property type="project" value="UniProtKB-UniRule"/>
</dbReference>
<dbReference type="GO" id="GO:0005524">
    <property type="term" value="F:ATP binding"/>
    <property type="evidence" value="ECO:0007669"/>
    <property type="project" value="UniProtKB-UniRule"/>
</dbReference>
<dbReference type="GO" id="GO:0046872">
    <property type="term" value="F:metal ion binding"/>
    <property type="evidence" value="ECO:0007669"/>
    <property type="project" value="UniProtKB-UniRule"/>
</dbReference>
<dbReference type="GO" id="GO:0004764">
    <property type="term" value="F:shikimate 3-dehydrogenase (NADP+) activity"/>
    <property type="evidence" value="ECO:0007669"/>
    <property type="project" value="UniProtKB-UniRule"/>
</dbReference>
<dbReference type="GO" id="GO:0004765">
    <property type="term" value="F:shikimate kinase activity"/>
    <property type="evidence" value="ECO:0007669"/>
    <property type="project" value="UniProtKB-UniRule"/>
</dbReference>
<dbReference type="GO" id="GO:0008652">
    <property type="term" value="P:amino acid biosynthetic process"/>
    <property type="evidence" value="ECO:0007669"/>
    <property type="project" value="UniProtKB-KW"/>
</dbReference>
<dbReference type="GO" id="GO:0009073">
    <property type="term" value="P:aromatic amino acid family biosynthetic process"/>
    <property type="evidence" value="ECO:0007669"/>
    <property type="project" value="UniProtKB-UniRule"/>
</dbReference>
<dbReference type="GO" id="GO:0009423">
    <property type="term" value="P:chorismate biosynthetic process"/>
    <property type="evidence" value="ECO:0007669"/>
    <property type="project" value="UniProtKB-UniRule"/>
</dbReference>
<dbReference type="CDD" id="cd00502">
    <property type="entry name" value="DHQase_I"/>
    <property type="match status" value="1"/>
</dbReference>
<dbReference type="CDD" id="cd08195">
    <property type="entry name" value="DHQS"/>
    <property type="match status" value="1"/>
</dbReference>
<dbReference type="CDD" id="cd01556">
    <property type="entry name" value="EPSP_synthase"/>
    <property type="match status" value="1"/>
</dbReference>
<dbReference type="CDD" id="cd01065">
    <property type="entry name" value="NAD_bind_Shikimate_DH"/>
    <property type="match status" value="1"/>
</dbReference>
<dbReference type="CDD" id="cd00464">
    <property type="entry name" value="SK"/>
    <property type="match status" value="1"/>
</dbReference>
<dbReference type="FunFam" id="1.20.1090.10:FF:000007">
    <property type="entry name" value="Pentafunctional AROM polypeptide"/>
    <property type="match status" value="1"/>
</dbReference>
<dbReference type="FunFam" id="3.20.20.70:FF:000135">
    <property type="entry name" value="Pentafunctional AROM polypeptide"/>
    <property type="match status" value="1"/>
</dbReference>
<dbReference type="FunFam" id="3.40.50.1970:FF:000007">
    <property type="entry name" value="Pentafunctional AROM polypeptide"/>
    <property type="match status" value="1"/>
</dbReference>
<dbReference type="FunFam" id="3.40.50.300:FF:001256">
    <property type="entry name" value="Pentafunctional AROM polypeptide"/>
    <property type="match status" value="1"/>
</dbReference>
<dbReference type="FunFam" id="3.65.10.10:FF:000007">
    <property type="entry name" value="Pentafunctional AROM polypeptide"/>
    <property type="match status" value="1"/>
</dbReference>
<dbReference type="Gene3D" id="3.40.50.1970">
    <property type="match status" value="1"/>
</dbReference>
<dbReference type="Gene3D" id="3.20.20.70">
    <property type="entry name" value="Aldolase class I"/>
    <property type="match status" value="1"/>
</dbReference>
<dbReference type="Gene3D" id="1.20.1090.10">
    <property type="entry name" value="Dehydroquinate synthase-like - alpha domain"/>
    <property type="match status" value="1"/>
</dbReference>
<dbReference type="Gene3D" id="3.65.10.10">
    <property type="entry name" value="Enolpyruvate transferase domain"/>
    <property type="match status" value="2"/>
</dbReference>
<dbReference type="Gene3D" id="3.40.50.10860">
    <property type="entry name" value="Leucine Dehydrogenase, chain A, domain 1"/>
    <property type="match status" value="1"/>
</dbReference>
<dbReference type="Gene3D" id="3.40.50.720">
    <property type="entry name" value="NAD(P)-binding Rossmann-like Domain"/>
    <property type="match status" value="1"/>
</dbReference>
<dbReference type="Gene3D" id="3.40.50.300">
    <property type="entry name" value="P-loop containing nucleotide triphosphate hydrolases"/>
    <property type="match status" value="1"/>
</dbReference>
<dbReference type="HAMAP" id="MF_00210">
    <property type="entry name" value="EPSP_synth"/>
    <property type="match status" value="1"/>
</dbReference>
<dbReference type="HAMAP" id="MF_03143">
    <property type="entry name" value="Pentafunct_AroM"/>
    <property type="match status" value="1"/>
</dbReference>
<dbReference type="HAMAP" id="MF_00109">
    <property type="entry name" value="Shikimate_kinase"/>
    <property type="match status" value="1"/>
</dbReference>
<dbReference type="InterPro" id="IPR013785">
    <property type="entry name" value="Aldolase_TIM"/>
</dbReference>
<dbReference type="InterPro" id="IPR046346">
    <property type="entry name" value="Aminoacid_DH-like_N_sf"/>
</dbReference>
<dbReference type="InterPro" id="IPR016037">
    <property type="entry name" value="DHQ_synth_AroB"/>
</dbReference>
<dbReference type="InterPro" id="IPR030960">
    <property type="entry name" value="DHQS/DOIS_N"/>
</dbReference>
<dbReference type="InterPro" id="IPR056179">
    <property type="entry name" value="DHQS_C"/>
</dbReference>
<dbReference type="InterPro" id="IPR001381">
    <property type="entry name" value="DHquinase_I"/>
</dbReference>
<dbReference type="InterPro" id="IPR001986">
    <property type="entry name" value="Enolpyruvate_Tfrase_dom"/>
</dbReference>
<dbReference type="InterPro" id="IPR036968">
    <property type="entry name" value="Enolpyruvate_Tfrase_sf"/>
</dbReference>
<dbReference type="InterPro" id="IPR006264">
    <property type="entry name" value="EPSP_synthase"/>
</dbReference>
<dbReference type="InterPro" id="IPR023193">
    <property type="entry name" value="EPSP_synthase_CS"/>
</dbReference>
<dbReference type="InterPro" id="IPR036291">
    <property type="entry name" value="NAD(P)-bd_dom_sf"/>
</dbReference>
<dbReference type="InterPro" id="IPR027417">
    <property type="entry name" value="P-loop_NTPase"/>
</dbReference>
<dbReference type="InterPro" id="IPR008289">
    <property type="entry name" value="Pentafunct_AroM"/>
</dbReference>
<dbReference type="InterPro" id="IPR013792">
    <property type="entry name" value="RNA3'P_cycl/enolpyr_Trfase_a/b"/>
</dbReference>
<dbReference type="InterPro" id="IPR041121">
    <property type="entry name" value="SDH_C"/>
</dbReference>
<dbReference type="InterPro" id="IPR031322">
    <property type="entry name" value="Shikimate/glucono_kinase"/>
</dbReference>
<dbReference type="InterPro" id="IPR013708">
    <property type="entry name" value="Shikimate_DH-bd_N"/>
</dbReference>
<dbReference type="InterPro" id="IPR010110">
    <property type="entry name" value="Shikimate_DH_AroM-type"/>
</dbReference>
<dbReference type="InterPro" id="IPR000623">
    <property type="entry name" value="Shikimate_kinase/TSH1"/>
</dbReference>
<dbReference type="InterPro" id="IPR023000">
    <property type="entry name" value="Shikimate_kinase_CS"/>
</dbReference>
<dbReference type="NCBIfam" id="TIGR01356">
    <property type="entry name" value="aroA"/>
    <property type="match status" value="1"/>
</dbReference>
<dbReference type="NCBIfam" id="TIGR01357">
    <property type="entry name" value="aroB"/>
    <property type="match status" value="1"/>
</dbReference>
<dbReference type="NCBIfam" id="TIGR01093">
    <property type="entry name" value="aroD"/>
    <property type="match status" value="1"/>
</dbReference>
<dbReference type="NCBIfam" id="TIGR01809">
    <property type="entry name" value="Shik-DH-AROM"/>
    <property type="match status" value="1"/>
</dbReference>
<dbReference type="PANTHER" id="PTHR21090">
    <property type="entry name" value="AROM/DEHYDROQUINATE SYNTHASE"/>
    <property type="match status" value="1"/>
</dbReference>
<dbReference type="PANTHER" id="PTHR21090:SF5">
    <property type="entry name" value="PENTAFUNCTIONAL AROM POLYPEPTIDE"/>
    <property type="match status" value="1"/>
</dbReference>
<dbReference type="Pfam" id="PF01761">
    <property type="entry name" value="DHQ_synthase"/>
    <property type="match status" value="1"/>
</dbReference>
<dbReference type="Pfam" id="PF24621">
    <property type="entry name" value="DHQS_C"/>
    <property type="match status" value="1"/>
</dbReference>
<dbReference type="Pfam" id="PF01487">
    <property type="entry name" value="DHquinase_I"/>
    <property type="match status" value="1"/>
</dbReference>
<dbReference type="Pfam" id="PF00275">
    <property type="entry name" value="EPSP_synthase"/>
    <property type="match status" value="1"/>
</dbReference>
<dbReference type="Pfam" id="PF18317">
    <property type="entry name" value="SDH_C"/>
    <property type="match status" value="1"/>
</dbReference>
<dbReference type="Pfam" id="PF08501">
    <property type="entry name" value="Shikimate_dh_N"/>
    <property type="match status" value="1"/>
</dbReference>
<dbReference type="Pfam" id="PF01202">
    <property type="entry name" value="SKI"/>
    <property type="match status" value="1"/>
</dbReference>
<dbReference type="PIRSF" id="PIRSF000514">
    <property type="entry name" value="Pentafunct_AroM"/>
    <property type="match status" value="1"/>
</dbReference>
<dbReference type="PRINTS" id="PR01100">
    <property type="entry name" value="SHIKIMTKNASE"/>
</dbReference>
<dbReference type="SUPFAM" id="SSF51569">
    <property type="entry name" value="Aldolase"/>
    <property type="match status" value="1"/>
</dbReference>
<dbReference type="SUPFAM" id="SSF53223">
    <property type="entry name" value="Aminoacid dehydrogenase-like, N-terminal domain"/>
    <property type="match status" value="1"/>
</dbReference>
<dbReference type="SUPFAM" id="SSF56796">
    <property type="entry name" value="Dehydroquinate synthase-like"/>
    <property type="match status" value="1"/>
</dbReference>
<dbReference type="SUPFAM" id="SSF55205">
    <property type="entry name" value="EPT/RTPC-like"/>
    <property type="match status" value="1"/>
</dbReference>
<dbReference type="SUPFAM" id="SSF51735">
    <property type="entry name" value="NAD(P)-binding Rossmann-fold domains"/>
    <property type="match status" value="1"/>
</dbReference>
<dbReference type="SUPFAM" id="SSF52540">
    <property type="entry name" value="P-loop containing nucleoside triphosphate hydrolases"/>
    <property type="match status" value="1"/>
</dbReference>
<dbReference type="PROSITE" id="PS00104">
    <property type="entry name" value="EPSP_SYNTHASE_1"/>
    <property type="match status" value="1"/>
</dbReference>
<dbReference type="PROSITE" id="PS00885">
    <property type="entry name" value="EPSP_SYNTHASE_2"/>
    <property type="match status" value="1"/>
</dbReference>
<dbReference type="PROSITE" id="PS01128">
    <property type="entry name" value="SHIKIMATE_KINASE"/>
    <property type="match status" value="1"/>
</dbReference>
<gene>
    <name evidence="1" type="primary">ARO1-1</name>
    <name type="ORF">LELG_05773</name>
</gene>
<proteinExistence type="inferred from homology"/>
<keyword id="KW-0028">Amino-acid biosynthesis</keyword>
<keyword id="KW-0057">Aromatic amino acid biosynthesis</keyword>
<keyword id="KW-0067">ATP-binding</keyword>
<keyword id="KW-0963">Cytoplasm</keyword>
<keyword id="KW-0418">Kinase</keyword>
<keyword id="KW-0456">Lyase</keyword>
<keyword id="KW-0479">Metal-binding</keyword>
<keyword id="KW-0511">Multifunctional enzyme</keyword>
<keyword id="KW-0521">NADP</keyword>
<keyword id="KW-0547">Nucleotide-binding</keyword>
<keyword id="KW-0560">Oxidoreductase</keyword>
<keyword id="KW-1185">Reference proteome</keyword>
<keyword id="KW-0808">Transferase</keyword>
<keyword id="KW-0862">Zinc</keyword>
<organism>
    <name type="scientific">Lodderomyces elongisporus (strain ATCC 11503 / CBS 2605 / JCM 1781 / NBRC 1676 / NRRL YB-4239)</name>
    <name type="common">Yeast</name>
    <name type="synonym">Saccharomyces elongisporus</name>
    <dbReference type="NCBI Taxonomy" id="379508"/>
    <lineage>
        <taxon>Eukaryota</taxon>
        <taxon>Fungi</taxon>
        <taxon>Dikarya</taxon>
        <taxon>Ascomycota</taxon>
        <taxon>Saccharomycotina</taxon>
        <taxon>Pichiomycetes</taxon>
        <taxon>Debaryomycetaceae</taxon>
        <taxon>Candida/Lodderomyces clade</taxon>
        <taxon>Lodderomyces</taxon>
    </lineage>
</organism>
<protein>
    <recommendedName>
        <fullName evidence="1">Pentafunctional AROM polypeptide 1</fullName>
    </recommendedName>
    <domain>
        <recommendedName>
            <fullName evidence="1">3-dehydroquinate synthase</fullName>
            <shortName evidence="1">DHQS</shortName>
            <ecNumber evidence="1">4.2.3.4</ecNumber>
        </recommendedName>
    </domain>
    <domain>
        <recommendedName>
            <fullName evidence="1">3-phosphoshikimate 1-carboxyvinyltransferase</fullName>
            <ecNumber evidence="1">2.5.1.19</ecNumber>
        </recommendedName>
        <alternativeName>
            <fullName evidence="1">5-enolpyruvylshikimate-3-phosphate synthase</fullName>
            <shortName evidence="1">EPSP synthase</shortName>
            <shortName evidence="1">EPSPS</shortName>
        </alternativeName>
    </domain>
    <domain>
        <recommendedName>
            <fullName evidence="1">Shikimate kinase</fullName>
            <shortName evidence="1">SK</shortName>
            <ecNumber evidence="1">2.7.1.71</ecNumber>
        </recommendedName>
    </domain>
    <domain>
        <recommendedName>
            <fullName evidence="1">3-dehydroquinate dehydratase</fullName>
            <shortName evidence="1">3-dehydroquinase</shortName>
            <ecNumber evidence="1">4.2.1.10</ecNumber>
        </recommendedName>
    </domain>
    <domain>
        <recommendedName>
            <fullName evidence="1">Shikimate dehydrogenase</fullName>
            <ecNumber evidence="1">1.1.1.25</ecNumber>
        </recommendedName>
    </domain>
</protein>
<comment type="function">
    <text evidence="1">The AROM polypeptide catalyzes 5 consecutive enzymatic reactions in prechorismate polyaromatic amino acid biosynthesis.</text>
</comment>
<comment type="catalytic activity">
    <reaction evidence="1">
        <text>7-phospho-2-dehydro-3-deoxy-D-arabino-heptonate = 3-dehydroquinate + phosphate</text>
        <dbReference type="Rhea" id="RHEA:21968"/>
        <dbReference type="ChEBI" id="CHEBI:32364"/>
        <dbReference type="ChEBI" id="CHEBI:43474"/>
        <dbReference type="ChEBI" id="CHEBI:58394"/>
        <dbReference type="EC" id="4.2.3.4"/>
    </reaction>
</comment>
<comment type="catalytic activity">
    <reaction evidence="1">
        <text>3-dehydroquinate = 3-dehydroshikimate + H2O</text>
        <dbReference type="Rhea" id="RHEA:21096"/>
        <dbReference type="ChEBI" id="CHEBI:15377"/>
        <dbReference type="ChEBI" id="CHEBI:16630"/>
        <dbReference type="ChEBI" id="CHEBI:32364"/>
        <dbReference type="EC" id="4.2.1.10"/>
    </reaction>
</comment>
<comment type="catalytic activity">
    <reaction evidence="1">
        <text>shikimate + NADP(+) = 3-dehydroshikimate + NADPH + H(+)</text>
        <dbReference type="Rhea" id="RHEA:17737"/>
        <dbReference type="ChEBI" id="CHEBI:15378"/>
        <dbReference type="ChEBI" id="CHEBI:16630"/>
        <dbReference type="ChEBI" id="CHEBI:36208"/>
        <dbReference type="ChEBI" id="CHEBI:57783"/>
        <dbReference type="ChEBI" id="CHEBI:58349"/>
        <dbReference type="EC" id="1.1.1.25"/>
    </reaction>
</comment>
<comment type="catalytic activity">
    <reaction evidence="1">
        <text>shikimate + ATP = 3-phosphoshikimate + ADP + H(+)</text>
        <dbReference type="Rhea" id="RHEA:13121"/>
        <dbReference type="ChEBI" id="CHEBI:15378"/>
        <dbReference type="ChEBI" id="CHEBI:30616"/>
        <dbReference type="ChEBI" id="CHEBI:36208"/>
        <dbReference type="ChEBI" id="CHEBI:145989"/>
        <dbReference type="ChEBI" id="CHEBI:456216"/>
        <dbReference type="EC" id="2.7.1.71"/>
    </reaction>
</comment>
<comment type="catalytic activity">
    <reaction evidence="1">
        <text>3-phosphoshikimate + phosphoenolpyruvate = 5-O-(1-carboxyvinyl)-3-phosphoshikimate + phosphate</text>
        <dbReference type="Rhea" id="RHEA:21256"/>
        <dbReference type="ChEBI" id="CHEBI:43474"/>
        <dbReference type="ChEBI" id="CHEBI:57701"/>
        <dbReference type="ChEBI" id="CHEBI:58702"/>
        <dbReference type="ChEBI" id="CHEBI:145989"/>
        <dbReference type="EC" id="2.5.1.19"/>
    </reaction>
</comment>
<comment type="cofactor">
    <cofactor>
        <name>Zn(2+)</name>
        <dbReference type="ChEBI" id="CHEBI:29105"/>
    </cofactor>
    <text>Binds 2 Zn(2+) ions per subunit.</text>
</comment>
<comment type="pathway">
    <text evidence="1">Metabolic intermediate biosynthesis; chorismate biosynthesis; chorismate from D-erythrose 4-phosphate and phosphoenolpyruvate: step 2/7.</text>
</comment>
<comment type="pathway">
    <text evidence="1">Metabolic intermediate biosynthesis; chorismate biosynthesis; chorismate from D-erythrose 4-phosphate and phosphoenolpyruvate: step 3/7.</text>
</comment>
<comment type="pathway">
    <text evidence="1">Metabolic intermediate biosynthesis; chorismate biosynthesis; chorismate from D-erythrose 4-phosphate and phosphoenolpyruvate: step 4/7.</text>
</comment>
<comment type="pathway">
    <text evidence="1">Metabolic intermediate biosynthesis; chorismate biosynthesis; chorismate from D-erythrose 4-phosphate and phosphoenolpyruvate: step 5/7.</text>
</comment>
<comment type="pathway">
    <text evidence="1">Metabolic intermediate biosynthesis; chorismate biosynthesis; chorismate from D-erythrose 4-phosphate and phosphoenolpyruvate: step 6/7.</text>
</comment>
<comment type="subunit">
    <text evidence="1">Homodimer.</text>
</comment>
<comment type="subcellular location">
    <subcellularLocation>
        <location evidence="1">Cytoplasm</location>
    </subcellularLocation>
</comment>
<comment type="similarity">
    <text evidence="1">In the N-terminal section; belongs to the sugar phosphate cyclases superfamily. Dehydroquinate synthase family.</text>
</comment>
<comment type="similarity">
    <text evidence="1">In the 2nd section; belongs to the EPSP synthase family.</text>
</comment>
<comment type="similarity">
    <text evidence="1">In the 3rd section; belongs to the shikimate kinase family.</text>
</comment>
<comment type="similarity">
    <text evidence="1">In the 4th section; belongs to the type-I 3-dehydroquinase family.</text>
</comment>
<comment type="similarity">
    <text evidence="1">In the C-terminal section; belongs to the shikimate dehydrogenase family.</text>
</comment>
<name>ARO11_LODEL</name>
<reference key="1">
    <citation type="journal article" date="2009" name="Nature">
        <title>Evolution of pathogenicity and sexual reproduction in eight Candida genomes.</title>
        <authorList>
            <person name="Butler G."/>
            <person name="Rasmussen M.D."/>
            <person name="Lin M.F."/>
            <person name="Santos M.A.S."/>
            <person name="Sakthikumar S."/>
            <person name="Munro C.A."/>
            <person name="Rheinbay E."/>
            <person name="Grabherr M."/>
            <person name="Forche A."/>
            <person name="Reedy J.L."/>
            <person name="Agrafioti I."/>
            <person name="Arnaud M.B."/>
            <person name="Bates S."/>
            <person name="Brown A.J.P."/>
            <person name="Brunke S."/>
            <person name="Costanzo M.C."/>
            <person name="Fitzpatrick D.A."/>
            <person name="de Groot P.W.J."/>
            <person name="Harris D."/>
            <person name="Hoyer L.L."/>
            <person name="Hube B."/>
            <person name="Klis F.M."/>
            <person name="Kodira C."/>
            <person name="Lennard N."/>
            <person name="Logue M.E."/>
            <person name="Martin R."/>
            <person name="Neiman A.M."/>
            <person name="Nikolaou E."/>
            <person name="Quail M.A."/>
            <person name="Quinn J."/>
            <person name="Santos M.C."/>
            <person name="Schmitzberger F.F."/>
            <person name="Sherlock G."/>
            <person name="Shah P."/>
            <person name="Silverstein K.A.T."/>
            <person name="Skrzypek M.S."/>
            <person name="Soll D."/>
            <person name="Staggs R."/>
            <person name="Stansfield I."/>
            <person name="Stumpf M.P.H."/>
            <person name="Sudbery P.E."/>
            <person name="Srikantha T."/>
            <person name="Zeng Q."/>
            <person name="Berman J."/>
            <person name="Berriman M."/>
            <person name="Heitman J."/>
            <person name="Gow N.A.R."/>
            <person name="Lorenz M.C."/>
            <person name="Birren B.W."/>
            <person name="Kellis M."/>
            <person name="Cuomo C.A."/>
        </authorList>
    </citation>
    <scope>NUCLEOTIDE SEQUENCE [LARGE SCALE GENOMIC DNA]</scope>
    <source>
        <strain>ATCC 11503 / BCRC 21390 / CBS 2605 / JCM 1781 / NBRC 1676 / NRRL YB-4239</strain>
    </source>
</reference>
<evidence type="ECO:0000255" key="1">
    <source>
        <dbReference type="HAMAP-Rule" id="MF_03143"/>
    </source>
</evidence>
<sequence length="1551" mass="170216">MSIEKVSILGKESIHVGYGIQSHIVEETIKCLASSTYVIISDTNMSKTPTYEKLQDSFQKELAKQRPQSRLLTYLIPPGENHKNRETKAEVEDFLLQQGCTRDTVILAVGGGVIGDMIGFVAATFMRGVRVVQVPTTLLSMVDSSVGGKTAIDTELGKNFIGAFHQPEFVFCDVSFLQTLPKRQLINGMAEVVKTAAIWDETEFTRLESFAKRFLAEISAPTPNLESIKDELIKTVLGSVRVKAFVVSADEKEGGLRNLLNFGHTIGHAIEAILTPEALHGECVSIGMIKEAELSRYLGILPPSAVARLSKCLAAYGLPISVDEKIFSKIIGAKKNNLKIDSLIKKMLIDKKNDGSKIRCVLLESIGKCYESKAHQIFKEDIQVVMTDEVFVHPFANRHPESVSITPPGSKSISNRALILAALGEGTTRIKNLLHSDDTKHMLDAVVLMKGATVSFEDSGDTVVVQGHGGKLFACKEEIYLGNAGTASRFLTAVAALVNSTQDEKSVTLTGNARMQERPIAALVDALTTNGSKVDYLNKQGSLPLKIEAGNGFKGGRIELAATTSSQYVSAILMCAPYAEKEVTLSLVGGKPISQLYIDMTIAMMKDFGVDVTKSETEEYTYHIPKSVYQNPQEYVVESDASSATYPLAFAALTNSSCTIPNIGSSSLQGDARFAVDVLKPMGCTVEQTSKSTTVTGPPIGTLKALPEIDMEPMTDAFLTASVVAAVSQGTTTISGIANQRVKECNRIKAMVDELAKFGVSADETEDGIRIHGVQLRDLKTPGGRGVKTYDDHRVAMSFSLLAGLCKDPVLIQERSTTGKTWPGWWDVLHSKFNAKLEGHEYIRQRSGSLRNGDRSIVIIGMRAAGKTTLSRWLAEHLNFKLLDLDQYLEKKLAVDIKLLVKEKGWDYFREKETEVLNECLEKFGKGHILATGGGIVEGEKPREALKNYTKSGGIVLHLHRDLKETVNFLSKDPTRPAYSDDIEEVWKRREKWYHECSNYHFYSTHCTSEAEFANLKLVFAKFVSKITGDDTFVLPATRSTFVTLTYPDLRKVPSLIKDVSETSNAVELRVDLLANQETAYIAEQIGLLRSVATDLPILYTVRTKSQCGQYPDEDEEGMRKLLMFGLKMGVDIIDLQLISSPSTIAEVISKRGHTKIIASHHDFTGDLKWDNVEWKNKYAQGVSIDADFVKLVGMAKTFDDNLLLENFRRQNTEKPLIGINMGPQGKLSRVLNKVLTPVTHELITDKPIGVGQLSLKEINQALFQIGGLLEKEFWVVGSPVSHSRSPALHNAAYAALGLPYKFDIFETDDAEKVYSQLMQKPTFGGLAVTIPLKLDIKKYCTELSESAKLIGAVNTVTPIADGRKGFLGDNTDWIGIANSFKKADFALASGVSNGLVVGGGGTSRAAIFALHSLGCQKIYLLNRTESKLQDLVDSFPDYDLEILLEKNASSVSIGLVVSCVPGDKPLDETLMKKLDGVLSNNKGDKQTRPLLLEAAYKPRVTPIMELAKEKYDWTVIPGVEMLVNQGEAQFKLHTGYTAPYKVIHSAVLNE</sequence>
<accession>A5H2Q8</accession>